<name>GP171_HUMAN</name>
<organism>
    <name type="scientific">Homo sapiens</name>
    <name type="common">Human</name>
    <dbReference type="NCBI Taxonomy" id="9606"/>
    <lineage>
        <taxon>Eukaryota</taxon>
        <taxon>Metazoa</taxon>
        <taxon>Chordata</taxon>
        <taxon>Craniata</taxon>
        <taxon>Vertebrata</taxon>
        <taxon>Euteleostomi</taxon>
        <taxon>Mammalia</taxon>
        <taxon>Eutheria</taxon>
        <taxon>Euarchontoglires</taxon>
        <taxon>Primates</taxon>
        <taxon>Haplorrhini</taxon>
        <taxon>Catarrhini</taxon>
        <taxon>Hominidae</taxon>
        <taxon>Homo</taxon>
    </lineage>
</organism>
<reference key="1">
    <citation type="journal article" date="1997" name="Gene">
        <title>A genetic selection for isolating cDNAs encoding secreted proteins.</title>
        <authorList>
            <person name="Jacobs K.A."/>
            <person name="Collins-Racie L.A."/>
            <person name="Colbert M."/>
            <person name="Duckett M."/>
            <person name="Golden-Fleet M."/>
            <person name="Kelleher K."/>
            <person name="Kriz R."/>
            <person name="LaVallie E.R."/>
            <person name="Merberg D."/>
            <person name="Spaulding V."/>
            <person name="Stover J."/>
            <person name="Williamson M.J."/>
            <person name="McCoy J.M."/>
        </authorList>
    </citation>
    <scope>NUCLEOTIDE SEQUENCE [MRNA]</scope>
    <source>
        <tissue>Peripheral blood monocyte</tissue>
    </source>
</reference>
<reference key="2">
    <citation type="journal article" date="2001" name="Am. J. Hum. Genet.">
        <title>Mutations in a novel gene with transmembrane domains underlie Usher syndrome type 3.</title>
        <authorList>
            <person name="Joensuu T."/>
            <person name="Haemaelaeinen R."/>
            <person name="Yuan B."/>
            <person name="Johnson C."/>
            <person name="Tegelberg S."/>
            <person name="Gasparini P."/>
            <person name="Zelante L."/>
            <person name="Pirvola U."/>
            <person name="Pakarinen L."/>
            <person name="Lehesjoki A.-E."/>
            <person name="de la Chapelle A."/>
            <person name="Sankila E.-M."/>
        </authorList>
    </citation>
    <scope>NUCLEOTIDE SEQUENCE [MRNA]</scope>
</reference>
<reference key="3">
    <citation type="submission" date="2005-09" db="EMBL/GenBank/DDBJ databases">
        <authorList>
            <person name="Mural R.J."/>
            <person name="Istrail S."/>
            <person name="Sutton G.G."/>
            <person name="Florea L."/>
            <person name="Halpern A.L."/>
            <person name="Mobarry C.M."/>
            <person name="Lippert R."/>
            <person name="Walenz B."/>
            <person name="Shatkay H."/>
            <person name="Dew I."/>
            <person name="Miller J.R."/>
            <person name="Flanigan M.J."/>
            <person name="Edwards N.J."/>
            <person name="Bolanos R."/>
            <person name="Fasulo D."/>
            <person name="Halldorsson B.V."/>
            <person name="Hannenhalli S."/>
            <person name="Turner R."/>
            <person name="Yooseph S."/>
            <person name="Lu F."/>
            <person name="Nusskern D.R."/>
            <person name="Shue B.C."/>
            <person name="Zheng X.H."/>
            <person name="Zhong F."/>
            <person name="Delcher A.L."/>
            <person name="Huson D.H."/>
            <person name="Kravitz S.A."/>
            <person name="Mouchard L."/>
            <person name="Reinert K."/>
            <person name="Remington K.A."/>
            <person name="Clark A.G."/>
            <person name="Waterman M.S."/>
            <person name="Eichler E.E."/>
            <person name="Adams M.D."/>
            <person name="Hunkapiller M.W."/>
            <person name="Myers E.W."/>
            <person name="Venter J.C."/>
        </authorList>
    </citation>
    <scope>NUCLEOTIDE SEQUENCE [LARGE SCALE GENOMIC DNA]</scope>
</reference>
<reference key="4">
    <citation type="journal article" date="2004" name="Genome Res.">
        <title>The status, quality, and expansion of the NIH full-length cDNA project: the Mammalian Gene Collection (MGC).</title>
        <authorList>
            <consortium name="The MGC Project Team"/>
        </authorList>
    </citation>
    <scope>NUCLEOTIDE SEQUENCE [LARGE SCALE MRNA]</scope>
    <scope>VARIANT VAL-283</scope>
    <source>
        <tissue>Pancreas</tissue>
    </source>
</reference>
<reference key="5">
    <citation type="journal article" date="2021" name="Nat. Commun.">
        <title>The GPR171 pathway suppresses T cell activation and limits antitumor immunity.</title>
        <authorList>
            <person name="Fujiwara Y."/>
            <person name="Torphy R.J."/>
            <person name="Sun Y."/>
            <person name="Miller E.N."/>
            <person name="Ho F."/>
            <person name="Borcherding N."/>
            <person name="Wu T."/>
            <person name="Torres R.M."/>
            <person name="Zhang W."/>
            <person name="Schulick R.D."/>
            <person name="Zhu Y."/>
        </authorList>
    </citation>
    <scope>FUNCTION</scope>
    <scope>TISSUE SPECIFICITY</scope>
</reference>
<gene>
    <name evidence="6" type="primary">GPR171</name>
    <name type="synonym">H963</name>
</gene>
<feature type="chain" id="PRO_0000069649" description="G-protein coupled receptor 171">
    <location>
        <begin position="1"/>
        <end position="319"/>
    </location>
</feature>
<feature type="topological domain" description="Extracellular" evidence="2">
    <location>
        <begin position="1"/>
        <end position="21"/>
    </location>
</feature>
<feature type="transmembrane region" description="Helical; Name=1" evidence="2">
    <location>
        <begin position="22"/>
        <end position="42"/>
    </location>
</feature>
<feature type="topological domain" description="Cytoplasmic" evidence="2">
    <location>
        <begin position="43"/>
        <end position="48"/>
    </location>
</feature>
<feature type="transmembrane region" description="Helical; Name=2" evidence="2">
    <location>
        <begin position="49"/>
        <end position="69"/>
    </location>
</feature>
<feature type="topological domain" description="Extracellular" evidence="2">
    <location>
        <begin position="70"/>
        <end position="89"/>
    </location>
</feature>
<feature type="transmembrane region" description="Helical; Name=3" evidence="2">
    <location>
        <begin position="90"/>
        <end position="110"/>
    </location>
</feature>
<feature type="topological domain" description="Cytoplasmic" evidence="2">
    <location>
        <begin position="111"/>
        <end position="132"/>
    </location>
</feature>
<feature type="transmembrane region" description="Helical; Name=4" evidence="2">
    <location>
        <begin position="133"/>
        <end position="153"/>
    </location>
</feature>
<feature type="topological domain" description="Extracellular" evidence="2">
    <location>
        <begin position="154"/>
        <end position="181"/>
    </location>
</feature>
<feature type="transmembrane region" description="Helical; Name=5" evidence="2">
    <location>
        <begin position="182"/>
        <end position="202"/>
    </location>
</feature>
<feature type="topological domain" description="Cytoplasmic" evidence="2">
    <location>
        <begin position="203"/>
        <end position="224"/>
    </location>
</feature>
<feature type="transmembrane region" description="Helical; Name=6" evidence="2">
    <location>
        <begin position="225"/>
        <end position="245"/>
    </location>
</feature>
<feature type="topological domain" description="Extracellular" evidence="2">
    <location>
        <begin position="246"/>
        <end position="268"/>
    </location>
</feature>
<feature type="transmembrane region" description="Helical; Name=7" evidence="2">
    <location>
        <begin position="269"/>
        <end position="289"/>
    </location>
</feature>
<feature type="topological domain" description="Cytoplasmic" evidence="2">
    <location>
        <begin position="290"/>
        <end position="319"/>
    </location>
</feature>
<feature type="glycosylation site" description="N-linked (GlcNAc...) asparagine" evidence="2">
    <location>
        <position position="3"/>
    </location>
</feature>
<feature type="sequence variant" id="VAR_049408" description="In dbSNP:rs3732756." evidence="4">
    <original>I</original>
    <variation>V</variation>
    <location>
        <position position="283"/>
    </location>
</feature>
<dbReference type="EMBL" id="AF002986">
    <property type="protein sequence ID" value="AAC51846.1"/>
    <property type="molecule type" value="mRNA"/>
</dbReference>
<dbReference type="EMBL" id="AF411849">
    <property type="protein sequence ID" value="AAL47763.1"/>
    <property type="molecule type" value="Genomic_DNA"/>
</dbReference>
<dbReference type="EMBL" id="CH471052">
    <property type="protein sequence ID" value="EAW78811.1"/>
    <property type="molecule type" value="Genomic_DNA"/>
</dbReference>
<dbReference type="EMBL" id="CH471052">
    <property type="protein sequence ID" value="EAW78812.1"/>
    <property type="molecule type" value="Genomic_DNA"/>
</dbReference>
<dbReference type="EMBL" id="BC036815">
    <property type="protein sequence ID" value="AAH36815.1"/>
    <property type="molecule type" value="mRNA"/>
</dbReference>
<dbReference type="CCDS" id="CCDS3155.1"/>
<dbReference type="RefSeq" id="NP_037440.3">
    <property type="nucleotide sequence ID" value="NM_013308.3"/>
</dbReference>
<dbReference type="RefSeq" id="XP_005247459.1">
    <property type="nucleotide sequence ID" value="XM_005247402.4"/>
</dbReference>
<dbReference type="RefSeq" id="XP_005247460.1">
    <property type="nucleotide sequence ID" value="XM_005247403.4"/>
</dbReference>
<dbReference type="RefSeq" id="XP_016861763.1">
    <property type="nucleotide sequence ID" value="XM_017006274.1"/>
</dbReference>
<dbReference type="RefSeq" id="XP_047304010.1">
    <property type="nucleotide sequence ID" value="XM_047448054.1"/>
</dbReference>
<dbReference type="RefSeq" id="XP_047304011.1">
    <property type="nucleotide sequence ID" value="XM_047448055.1"/>
</dbReference>
<dbReference type="RefSeq" id="XP_047304012.1">
    <property type="nucleotide sequence ID" value="XM_047448056.1"/>
</dbReference>
<dbReference type="RefSeq" id="XP_054202360.1">
    <property type="nucleotide sequence ID" value="XM_054346385.1"/>
</dbReference>
<dbReference type="RefSeq" id="XP_054202361.1">
    <property type="nucleotide sequence ID" value="XM_054346386.1"/>
</dbReference>
<dbReference type="RefSeq" id="XP_054202362.1">
    <property type="nucleotide sequence ID" value="XM_054346387.1"/>
</dbReference>
<dbReference type="RefSeq" id="XP_054202363.1">
    <property type="nucleotide sequence ID" value="XM_054346388.1"/>
</dbReference>
<dbReference type="RefSeq" id="XP_054202364.1">
    <property type="nucleotide sequence ID" value="XM_054346389.1"/>
</dbReference>
<dbReference type="SMR" id="O14626"/>
<dbReference type="BioGRID" id="118956">
    <property type="interactions" value="4"/>
</dbReference>
<dbReference type="FunCoup" id="O14626">
    <property type="interactions" value="359"/>
</dbReference>
<dbReference type="IntAct" id="O14626">
    <property type="interactions" value="2"/>
</dbReference>
<dbReference type="STRING" id="9606.ENSP00000308479"/>
<dbReference type="ChEMBL" id="CHEMBL4523860"/>
<dbReference type="GlyCosmos" id="O14626">
    <property type="glycosylation" value="1 site, No reported glycans"/>
</dbReference>
<dbReference type="GlyGen" id="O14626">
    <property type="glycosylation" value="1 site"/>
</dbReference>
<dbReference type="iPTMnet" id="O14626"/>
<dbReference type="PhosphoSitePlus" id="O14626"/>
<dbReference type="BioMuta" id="GPR171"/>
<dbReference type="MassIVE" id="O14626"/>
<dbReference type="PaxDb" id="9606-ENSP00000308479"/>
<dbReference type="PeptideAtlas" id="O14626"/>
<dbReference type="ProteomicsDB" id="48124"/>
<dbReference type="Antibodypedia" id="18294">
    <property type="antibodies" value="313 antibodies from 31 providers"/>
</dbReference>
<dbReference type="DNASU" id="29909"/>
<dbReference type="Ensembl" id="ENST00000309180.6">
    <property type="protein sequence ID" value="ENSP00000308479.5"/>
    <property type="gene ID" value="ENSG00000174946.7"/>
</dbReference>
<dbReference type="Ensembl" id="ENST00000617554.1">
    <property type="protein sequence ID" value="ENSP00000482588.1"/>
    <property type="gene ID" value="ENSG00000174946.7"/>
</dbReference>
<dbReference type="GeneID" id="29909"/>
<dbReference type="KEGG" id="hsa:29909"/>
<dbReference type="MANE-Select" id="ENST00000309180.6">
    <property type="protein sequence ID" value="ENSP00000308479.5"/>
    <property type="RefSeq nucleotide sequence ID" value="NM_013308.4"/>
    <property type="RefSeq protein sequence ID" value="NP_037440.3"/>
</dbReference>
<dbReference type="UCSC" id="uc003eyq.5">
    <property type="organism name" value="human"/>
</dbReference>
<dbReference type="AGR" id="HGNC:30057"/>
<dbReference type="CTD" id="29909"/>
<dbReference type="DisGeNET" id="29909"/>
<dbReference type="GeneCards" id="GPR171"/>
<dbReference type="HGNC" id="HGNC:30057">
    <property type="gene designation" value="GPR171"/>
</dbReference>
<dbReference type="HPA" id="ENSG00000174946">
    <property type="expression patterns" value="Tissue enhanced (intestine, lymphoid tissue)"/>
</dbReference>
<dbReference type="MIM" id="618925">
    <property type="type" value="gene"/>
</dbReference>
<dbReference type="neXtProt" id="NX_O14626"/>
<dbReference type="OpenTargets" id="ENSG00000174946"/>
<dbReference type="PharmGKB" id="PA134948560"/>
<dbReference type="VEuPathDB" id="HostDB:ENSG00000174946"/>
<dbReference type="eggNOG" id="ENOG502QTCA">
    <property type="taxonomic scope" value="Eukaryota"/>
</dbReference>
<dbReference type="GeneTree" id="ENSGT01110000267167"/>
<dbReference type="HOGENOM" id="CLU_009579_8_2_1"/>
<dbReference type="InParanoid" id="O14626"/>
<dbReference type="OMA" id="EPFTYFY"/>
<dbReference type="OrthoDB" id="9935079at2759"/>
<dbReference type="PAN-GO" id="O14626">
    <property type="GO annotations" value="2 GO annotations based on evolutionary models"/>
</dbReference>
<dbReference type="PhylomeDB" id="O14626"/>
<dbReference type="TreeFam" id="TF330969"/>
<dbReference type="PathwayCommons" id="O14626"/>
<dbReference type="SignaLink" id="O14626"/>
<dbReference type="BioGRID-ORCS" id="29909">
    <property type="hits" value="12 hits in 1139 CRISPR screens"/>
</dbReference>
<dbReference type="ChiTaRS" id="GPR171">
    <property type="organism name" value="human"/>
</dbReference>
<dbReference type="GeneWiki" id="GPR171"/>
<dbReference type="GenomeRNAi" id="29909"/>
<dbReference type="Pharos" id="O14626">
    <property type="development level" value="Tbio"/>
</dbReference>
<dbReference type="PRO" id="PR:O14626"/>
<dbReference type="Proteomes" id="UP000005640">
    <property type="component" value="Chromosome 3"/>
</dbReference>
<dbReference type="RNAct" id="O14626">
    <property type="molecule type" value="protein"/>
</dbReference>
<dbReference type="Bgee" id="ENSG00000174946">
    <property type="expression patterns" value="Expressed in male germ line stem cell (sensu Vertebrata) in testis and 126 other cell types or tissues"/>
</dbReference>
<dbReference type="ExpressionAtlas" id="O14626">
    <property type="expression patterns" value="baseline and differential"/>
</dbReference>
<dbReference type="GO" id="GO:0016020">
    <property type="term" value="C:membrane"/>
    <property type="evidence" value="ECO:0000303"/>
    <property type="project" value="UniProtKB"/>
</dbReference>
<dbReference type="GO" id="GO:0005886">
    <property type="term" value="C:plasma membrane"/>
    <property type="evidence" value="ECO:0007669"/>
    <property type="project" value="UniProtKB-SubCell"/>
</dbReference>
<dbReference type="GO" id="GO:0008528">
    <property type="term" value="F:G protein-coupled peptide receptor activity"/>
    <property type="evidence" value="ECO:0000250"/>
    <property type="project" value="UniProtKB"/>
</dbReference>
<dbReference type="GO" id="GO:0045028">
    <property type="term" value="F:G protein-coupled purinergic nucleotide receptor activity"/>
    <property type="evidence" value="ECO:0000318"/>
    <property type="project" value="GO_Central"/>
</dbReference>
<dbReference type="GO" id="GO:0004930">
    <property type="term" value="F:G protein-coupled receptor activity"/>
    <property type="evidence" value="ECO:0000303"/>
    <property type="project" value="UniProtKB"/>
</dbReference>
<dbReference type="GO" id="GO:0042923">
    <property type="term" value="F:neuropeptide binding"/>
    <property type="evidence" value="ECO:0000250"/>
    <property type="project" value="UniProtKB"/>
</dbReference>
<dbReference type="GO" id="GO:0008188">
    <property type="term" value="F:neuropeptide receptor activity"/>
    <property type="evidence" value="ECO:0000250"/>
    <property type="project" value="UniProtKB"/>
</dbReference>
<dbReference type="GO" id="GO:0007188">
    <property type="term" value="P:adenylate cyclase-modulating G protein-coupled receptor signaling pathway"/>
    <property type="evidence" value="ECO:0000250"/>
    <property type="project" value="UniProtKB"/>
</dbReference>
<dbReference type="GO" id="GO:0007186">
    <property type="term" value="P:G protein-coupled receptor signaling pathway"/>
    <property type="evidence" value="ECO:0000250"/>
    <property type="project" value="UniProtKB"/>
</dbReference>
<dbReference type="GO" id="GO:0045638">
    <property type="term" value="P:negative regulation of myeloid cell differentiation"/>
    <property type="evidence" value="ECO:0007669"/>
    <property type="project" value="Ensembl"/>
</dbReference>
<dbReference type="GO" id="GO:0060259">
    <property type="term" value="P:regulation of feeding behavior"/>
    <property type="evidence" value="ECO:0000250"/>
    <property type="project" value="UniProtKB"/>
</dbReference>
<dbReference type="GO" id="GO:0051930">
    <property type="term" value="P:regulation of sensory perception of pain"/>
    <property type="evidence" value="ECO:0000250"/>
    <property type="project" value="UniProtKB"/>
</dbReference>
<dbReference type="CDD" id="cd15167">
    <property type="entry name" value="7tmA_GPR171"/>
    <property type="match status" value="1"/>
</dbReference>
<dbReference type="FunFam" id="1.20.1070.10:FF:000206">
    <property type="entry name" value="Probable G-protein coupled receptor 171"/>
    <property type="match status" value="1"/>
</dbReference>
<dbReference type="Gene3D" id="1.20.1070.10">
    <property type="entry name" value="Rhodopsin 7-helix transmembrane proteins"/>
    <property type="match status" value="1"/>
</dbReference>
<dbReference type="InterPro" id="IPR000276">
    <property type="entry name" value="GPCR_Rhodpsn"/>
</dbReference>
<dbReference type="InterPro" id="IPR017452">
    <property type="entry name" value="GPCR_Rhodpsn_7TM"/>
</dbReference>
<dbReference type="InterPro" id="IPR048077">
    <property type="entry name" value="GPR171"/>
</dbReference>
<dbReference type="PANTHER" id="PTHR24233:SF4">
    <property type="entry name" value="G-PROTEIN COUPLED RECEPTOR 171"/>
    <property type="match status" value="1"/>
</dbReference>
<dbReference type="PANTHER" id="PTHR24233">
    <property type="entry name" value="P2Y PURINOCEPTOR-RELATED G-PROTEIN COUPLED RECEPTOR"/>
    <property type="match status" value="1"/>
</dbReference>
<dbReference type="Pfam" id="PF00001">
    <property type="entry name" value="7tm_1"/>
    <property type="match status" value="1"/>
</dbReference>
<dbReference type="PRINTS" id="PR00237">
    <property type="entry name" value="GPCRRHODOPSN"/>
</dbReference>
<dbReference type="PRINTS" id="PR01157">
    <property type="entry name" value="P2YPURNOCPTR"/>
</dbReference>
<dbReference type="SUPFAM" id="SSF81321">
    <property type="entry name" value="Family A G protein-coupled receptor-like"/>
    <property type="match status" value="1"/>
</dbReference>
<dbReference type="PROSITE" id="PS00237">
    <property type="entry name" value="G_PROTEIN_RECEP_F1_1"/>
    <property type="match status" value="1"/>
</dbReference>
<dbReference type="PROSITE" id="PS50262">
    <property type="entry name" value="G_PROTEIN_RECEP_F1_2"/>
    <property type="match status" value="1"/>
</dbReference>
<keyword id="KW-1003">Cell membrane</keyword>
<keyword id="KW-0297">G-protein coupled receptor</keyword>
<keyword id="KW-0325">Glycoprotein</keyword>
<keyword id="KW-0472">Membrane</keyword>
<keyword id="KW-1267">Proteomics identification</keyword>
<keyword id="KW-0675">Receptor</keyword>
<keyword id="KW-1185">Reference proteome</keyword>
<keyword id="KW-0807">Transducer</keyword>
<keyword id="KW-0812">Transmembrane</keyword>
<keyword id="KW-1133">Transmembrane helix</keyword>
<proteinExistence type="evidence at protein level"/>
<accession>O14626</accession>
<accession>D3DNJ4</accession>
<accession>Q8IV06</accession>
<protein>
    <recommendedName>
        <fullName>G-protein coupled receptor 171</fullName>
    </recommendedName>
    <alternativeName>
        <fullName>G-protein coupled receptor H963</fullName>
    </alternativeName>
</protein>
<evidence type="ECO:0000250" key="1">
    <source>
        <dbReference type="UniProtKB" id="Q8BG55"/>
    </source>
</evidence>
<evidence type="ECO:0000255" key="2"/>
<evidence type="ECO:0000255" key="3">
    <source>
        <dbReference type="PROSITE-ProRule" id="PRU00521"/>
    </source>
</evidence>
<evidence type="ECO:0000269" key="4">
    <source>
    </source>
</evidence>
<evidence type="ECO:0000269" key="5">
    <source>
    </source>
</evidence>
<evidence type="ECO:0000312" key="6">
    <source>
        <dbReference type="HGNC" id="HGNC:30057"/>
    </source>
</evidence>
<sequence length="319" mass="36754">MTNSSFFCPVYKDLEPFTYFFYLVFLVGIIGSCFATWAFIQKNTNHRCVSIYLINLLTADFLLTLALPVKIVVDLGVAPWKLKIFHCQVTACLIYINMYLSIIFLAFVSIDRCLQLTHSCKIYRIQEPGFAKMISTVVWLMVLLIMVPNMMIPIKDIKEKSNVGCMEFKKEFGRNWHLLTNFICVAIFLNFSAIILISNCLVIRQLYRNKDNENYPNVKKALINILLVTTGYIICFVPYHIVRIPYTLSQTEVITDCSTRISLFKAKEATLLLAVSNLCFDPILYYHLSKAFRSKVTETFASPKETKAQKEKLRCENNA</sequence>
<comment type="function">
    <text evidence="1 5">G-protein coupled receptor for Big LEN, a 16-amino acid neuropeptide produced from the precursor protein, proSAAS (encoded by PCSK1N). Acts through a G(i)-alpha-mediated pathway in response to Big LEN. Big LEN-GPR171 system plays an important role in regulating feeding and metabolism. Also plays a role in modulating fear and anxiety-like behaviors in the basolateral amygdala. Big LEN-GPR171 modulates the mu-type opioid receptor signaling and antinociception (By similarity). Acts as a negative regulator T cell function (PubMed:34615877).</text>
</comment>
<comment type="subcellular location">
    <subcellularLocation>
        <location evidence="1">Cell membrane</location>
        <topology evidence="2">Multi-pass membrane protein</topology>
    </subcellularLocation>
    <text evidence="1">Colocalized with GPR83 in the paraventricular nucleus.</text>
</comment>
<comment type="tissue specificity">
    <text evidence="5">Expressed in both T-cell subsets and natural killer cells, while it is undetectable in B cells or CD14(+) monocytes. Expressed in peripheral blood mononuclear cells (PBMC) and Jurkat cells (at protein level).</text>
</comment>
<comment type="similarity">
    <text evidence="3">Belongs to the G-protein coupled receptor 1 family.</text>
</comment>